<organism>
    <name type="scientific">Latilactobacillus sakei subsp. sakei (strain 23K)</name>
    <name type="common">Lactobacillus sakei subsp. sakei</name>
    <dbReference type="NCBI Taxonomy" id="314315"/>
    <lineage>
        <taxon>Bacteria</taxon>
        <taxon>Bacillati</taxon>
        <taxon>Bacillota</taxon>
        <taxon>Bacilli</taxon>
        <taxon>Lactobacillales</taxon>
        <taxon>Lactobacillaceae</taxon>
        <taxon>Latilactobacillus</taxon>
    </lineage>
</organism>
<dbReference type="EMBL" id="CR936503">
    <property type="protein sequence ID" value="CAI56077.1"/>
    <property type="molecule type" value="Genomic_DNA"/>
</dbReference>
<dbReference type="RefSeq" id="WP_004270185.1">
    <property type="nucleotide sequence ID" value="NC_007576.1"/>
</dbReference>
<dbReference type="SMR" id="Q38UQ8"/>
<dbReference type="STRING" id="314315.LCA_1769"/>
<dbReference type="GeneID" id="57132685"/>
<dbReference type="KEGG" id="lsa:LCA_1769"/>
<dbReference type="eggNOG" id="COG0049">
    <property type="taxonomic scope" value="Bacteria"/>
</dbReference>
<dbReference type="HOGENOM" id="CLU_072226_1_1_9"/>
<dbReference type="OrthoDB" id="9807653at2"/>
<dbReference type="Proteomes" id="UP000002707">
    <property type="component" value="Chromosome"/>
</dbReference>
<dbReference type="GO" id="GO:0015935">
    <property type="term" value="C:small ribosomal subunit"/>
    <property type="evidence" value="ECO:0007669"/>
    <property type="project" value="InterPro"/>
</dbReference>
<dbReference type="GO" id="GO:0019843">
    <property type="term" value="F:rRNA binding"/>
    <property type="evidence" value="ECO:0007669"/>
    <property type="project" value="UniProtKB-UniRule"/>
</dbReference>
<dbReference type="GO" id="GO:0003735">
    <property type="term" value="F:structural constituent of ribosome"/>
    <property type="evidence" value="ECO:0007669"/>
    <property type="project" value="InterPro"/>
</dbReference>
<dbReference type="GO" id="GO:0000049">
    <property type="term" value="F:tRNA binding"/>
    <property type="evidence" value="ECO:0007669"/>
    <property type="project" value="UniProtKB-UniRule"/>
</dbReference>
<dbReference type="GO" id="GO:0006412">
    <property type="term" value="P:translation"/>
    <property type="evidence" value="ECO:0007669"/>
    <property type="project" value="UniProtKB-UniRule"/>
</dbReference>
<dbReference type="CDD" id="cd14869">
    <property type="entry name" value="uS7_Bacteria"/>
    <property type="match status" value="1"/>
</dbReference>
<dbReference type="FunFam" id="1.10.455.10:FF:000001">
    <property type="entry name" value="30S ribosomal protein S7"/>
    <property type="match status" value="1"/>
</dbReference>
<dbReference type="Gene3D" id="1.10.455.10">
    <property type="entry name" value="Ribosomal protein S7 domain"/>
    <property type="match status" value="1"/>
</dbReference>
<dbReference type="HAMAP" id="MF_00480_B">
    <property type="entry name" value="Ribosomal_uS7_B"/>
    <property type="match status" value="1"/>
</dbReference>
<dbReference type="InterPro" id="IPR000235">
    <property type="entry name" value="Ribosomal_uS7"/>
</dbReference>
<dbReference type="InterPro" id="IPR005717">
    <property type="entry name" value="Ribosomal_uS7_bac/org-type"/>
</dbReference>
<dbReference type="InterPro" id="IPR020606">
    <property type="entry name" value="Ribosomal_uS7_CS"/>
</dbReference>
<dbReference type="InterPro" id="IPR023798">
    <property type="entry name" value="Ribosomal_uS7_dom"/>
</dbReference>
<dbReference type="InterPro" id="IPR036823">
    <property type="entry name" value="Ribosomal_uS7_dom_sf"/>
</dbReference>
<dbReference type="NCBIfam" id="TIGR01029">
    <property type="entry name" value="rpsG_bact"/>
    <property type="match status" value="1"/>
</dbReference>
<dbReference type="PANTHER" id="PTHR11205">
    <property type="entry name" value="RIBOSOMAL PROTEIN S7"/>
    <property type="match status" value="1"/>
</dbReference>
<dbReference type="Pfam" id="PF00177">
    <property type="entry name" value="Ribosomal_S7"/>
    <property type="match status" value="1"/>
</dbReference>
<dbReference type="PIRSF" id="PIRSF002122">
    <property type="entry name" value="RPS7p_RPS7a_RPS5e_RPS7o"/>
    <property type="match status" value="1"/>
</dbReference>
<dbReference type="SUPFAM" id="SSF47973">
    <property type="entry name" value="Ribosomal protein S7"/>
    <property type="match status" value="1"/>
</dbReference>
<dbReference type="PROSITE" id="PS00052">
    <property type="entry name" value="RIBOSOMAL_S7"/>
    <property type="match status" value="1"/>
</dbReference>
<name>RS7_LATSS</name>
<accession>Q38UQ8</accession>
<gene>
    <name evidence="1" type="primary">rpsG</name>
    <name type="ordered locus">LCA_1769</name>
</gene>
<feature type="chain" id="PRO_0000226506" description="Small ribosomal subunit protein uS7">
    <location>
        <begin position="1"/>
        <end position="156"/>
    </location>
</feature>
<comment type="function">
    <text evidence="1">One of the primary rRNA binding proteins, it binds directly to 16S rRNA where it nucleates assembly of the head domain of the 30S subunit. Is located at the subunit interface close to the decoding center, probably blocks exit of the E-site tRNA.</text>
</comment>
<comment type="subunit">
    <text evidence="1">Part of the 30S ribosomal subunit. Contacts proteins S9 and S11.</text>
</comment>
<comment type="similarity">
    <text evidence="1">Belongs to the universal ribosomal protein uS7 family.</text>
</comment>
<reference key="1">
    <citation type="journal article" date="2005" name="Nat. Biotechnol.">
        <title>The complete genome sequence of the meat-borne lactic acid bacterium Lactobacillus sakei 23K.</title>
        <authorList>
            <person name="Chaillou S."/>
            <person name="Champomier-Verges M.-C."/>
            <person name="Cornet M."/>
            <person name="Crutz-Le Coq A.-M."/>
            <person name="Dudez A.-M."/>
            <person name="Martin V."/>
            <person name="Beaufils S."/>
            <person name="Darbon-Rongere E."/>
            <person name="Bossy R."/>
            <person name="Loux V."/>
            <person name="Zagorec M."/>
        </authorList>
    </citation>
    <scope>NUCLEOTIDE SEQUENCE [LARGE SCALE GENOMIC DNA]</scope>
    <source>
        <strain>23K</strain>
    </source>
</reference>
<sequence length="156" mass="17977">MPRKGYVAKRDVLPDPMYNSKLVSRLINRLMIDGKRGTASTILYDAFDIIKEETGNEPLEVFEEAMNNIMPVLEVKARRIGGSNYQVPIEVRPERRTTLGLRWLVSYARLRGEHTMDQRLAREIMDAANNTGAAVKKREDTHKMADANRAFAHYRW</sequence>
<protein>
    <recommendedName>
        <fullName evidence="1">Small ribosomal subunit protein uS7</fullName>
    </recommendedName>
    <alternativeName>
        <fullName evidence="2">30S ribosomal protein S7</fullName>
    </alternativeName>
</protein>
<proteinExistence type="inferred from homology"/>
<evidence type="ECO:0000255" key="1">
    <source>
        <dbReference type="HAMAP-Rule" id="MF_00480"/>
    </source>
</evidence>
<evidence type="ECO:0000305" key="2"/>
<keyword id="KW-1185">Reference proteome</keyword>
<keyword id="KW-0687">Ribonucleoprotein</keyword>
<keyword id="KW-0689">Ribosomal protein</keyword>
<keyword id="KW-0694">RNA-binding</keyword>
<keyword id="KW-0699">rRNA-binding</keyword>
<keyword id="KW-0820">tRNA-binding</keyword>